<accession>A4YD40</accession>
<protein>
    <recommendedName>
        <fullName evidence="1">[LysW]-aminoadipate/[LysW]-glutamate kinase</fullName>
        <ecNumber evidence="1">2.7.2.17</ecNumber>
        <ecNumber evidence="1">2.7.2.19</ecNumber>
    </recommendedName>
</protein>
<keyword id="KW-0028">Amino-acid biosynthesis</keyword>
<keyword id="KW-0055">Arginine biosynthesis</keyword>
<keyword id="KW-0067">ATP-binding</keyword>
<keyword id="KW-0963">Cytoplasm</keyword>
<keyword id="KW-0418">Kinase</keyword>
<keyword id="KW-0457">Lysine biosynthesis</keyword>
<keyword id="KW-0547">Nucleotide-binding</keyword>
<keyword id="KW-1185">Reference proteome</keyword>
<keyword id="KW-0808">Transferase</keyword>
<gene>
    <name evidence="1" type="primary">lysZ</name>
    <name type="ordered locus">Msed_0165</name>
</gene>
<proteinExistence type="inferred from homology"/>
<reference key="1">
    <citation type="journal article" date="2008" name="Appl. Environ. Microbiol.">
        <title>The genome sequence of the metal-mobilizing, extremely thermoacidophilic archaeon Metallosphaera sedula provides insights into bioleaching-associated metabolism.</title>
        <authorList>
            <person name="Auernik K.S."/>
            <person name="Maezato Y."/>
            <person name="Blum P.H."/>
            <person name="Kelly R.M."/>
        </authorList>
    </citation>
    <scope>NUCLEOTIDE SEQUENCE [LARGE SCALE GENOMIC DNA]</scope>
    <source>
        <strain>ATCC 51363 / DSM 5348 / JCM 9185 / NBRC 15509 / TH2</strain>
    </source>
</reference>
<organism>
    <name type="scientific">Metallosphaera sedula (strain ATCC 51363 / DSM 5348 / JCM 9185 / NBRC 15509 / TH2)</name>
    <dbReference type="NCBI Taxonomy" id="399549"/>
    <lineage>
        <taxon>Archaea</taxon>
        <taxon>Thermoproteota</taxon>
        <taxon>Thermoprotei</taxon>
        <taxon>Sulfolobales</taxon>
        <taxon>Sulfolobaceae</taxon>
        <taxon>Metallosphaera</taxon>
    </lineage>
</organism>
<evidence type="ECO:0000255" key="1">
    <source>
        <dbReference type="HAMAP-Rule" id="MF_02082"/>
    </source>
</evidence>
<dbReference type="EC" id="2.7.2.17" evidence="1"/>
<dbReference type="EC" id="2.7.2.19" evidence="1"/>
<dbReference type="EMBL" id="CP000682">
    <property type="protein sequence ID" value="ABP94342.1"/>
    <property type="molecule type" value="Genomic_DNA"/>
</dbReference>
<dbReference type="RefSeq" id="WP_011921310.1">
    <property type="nucleotide sequence ID" value="NC_009440.1"/>
</dbReference>
<dbReference type="SMR" id="A4YD40"/>
<dbReference type="STRING" id="399549.Msed_0165"/>
<dbReference type="GeneID" id="91754605"/>
<dbReference type="KEGG" id="mse:Msed_0165"/>
<dbReference type="eggNOG" id="arCOG00862">
    <property type="taxonomic scope" value="Archaea"/>
</dbReference>
<dbReference type="HOGENOM" id="CLU_053680_2_0_2"/>
<dbReference type="UniPathway" id="UPA00033">
    <property type="reaction ID" value="UER00036"/>
</dbReference>
<dbReference type="UniPathway" id="UPA00068"/>
<dbReference type="Proteomes" id="UP000000242">
    <property type="component" value="Chromosome"/>
</dbReference>
<dbReference type="GO" id="GO:0005737">
    <property type="term" value="C:cytoplasm"/>
    <property type="evidence" value="ECO:0007669"/>
    <property type="project" value="UniProtKB-SubCell"/>
</dbReference>
<dbReference type="GO" id="GO:0003991">
    <property type="term" value="F:acetylglutamate kinase activity"/>
    <property type="evidence" value="ECO:0007669"/>
    <property type="project" value="TreeGrafter"/>
</dbReference>
<dbReference type="GO" id="GO:0005524">
    <property type="term" value="F:ATP binding"/>
    <property type="evidence" value="ECO:0007669"/>
    <property type="project" value="UniProtKB-KW"/>
</dbReference>
<dbReference type="GO" id="GO:0043744">
    <property type="term" value="F:N2-acetyl-L-aminoadipate kinase activity"/>
    <property type="evidence" value="ECO:0007669"/>
    <property type="project" value="RHEA"/>
</dbReference>
<dbReference type="GO" id="GO:0042450">
    <property type="term" value="P:arginine biosynthetic process via ornithine"/>
    <property type="evidence" value="ECO:0007669"/>
    <property type="project" value="UniProtKB-UniRule"/>
</dbReference>
<dbReference type="GO" id="GO:0006526">
    <property type="term" value="P:L-arginine biosynthetic process"/>
    <property type="evidence" value="ECO:0007669"/>
    <property type="project" value="UniProtKB-UniPathway"/>
</dbReference>
<dbReference type="GO" id="GO:0019878">
    <property type="term" value="P:lysine biosynthetic process via aminoadipic acid"/>
    <property type="evidence" value="ECO:0007669"/>
    <property type="project" value="UniProtKB-UniRule"/>
</dbReference>
<dbReference type="CDD" id="cd04251">
    <property type="entry name" value="AAK_NAGK-UC"/>
    <property type="match status" value="1"/>
</dbReference>
<dbReference type="Gene3D" id="3.40.1160.10">
    <property type="entry name" value="Acetylglutamate kinase-like"/>
    <property type="match status" value="1"/>
</dbReference>
<dbReference type="HAMAP" id="MF_02082">
    <property type="entry name" value="LysZ"/>
    <property type="match status" value="1"/>
</dbReference>
<dbReference type="InterPro" id="IPR036393">
    <property type="entry name" value="AceGlu_kinase-like_sf"/>
</dbReference>
<dbReference type="InterPro" id="IPR004662">
    <property type="entry name" value="AcgluKinase_fam"/>
</dbReference>
<dbReference type="InterPro" id="IPR001048">
    <property type="entry name" value="Asp/Glu/Uridylate_kinase"/>
</dbReference>
<dbReference type="InterPro" id="IPR037529">
    <property type="entry name" value="LysZ"/>
</dbReference>
<dbReference type="NCBIfam" id="TIGR00761">
    <property type="entry name" value="argB"/>
    <property type="match status" value="1"/>
</dbReference>
<dbReference type="NCBIfam" id="NF010662">
    <property type="entry name" value="PRK14058.1-4"/>
    <property type="match status" value="1"/>
</dbReference>
<dbReference type="PANTHER" id="PTHR23342">
    <property type="entry name" value="N-ACETYLGLUTAMATE SYNTHASE"/>
    <property type="match status" value="1"/>
</dbReference>
<dbReference type="PANTHER" id="PTHR23342:SF0">
    <property type="entry name" value="N-ACETYLGLUTAMATE SYNTHASE, MITOCHONDRIAL"/>
    <property type="match status" value="1"/>
</dbReference>
<dbReference type="Pfam" id="PF00696">
    <property type="entry name" value="AA_kinase"/>
    <property type="match status" value="1"/>
</dbReference>
<dbReference type="PIRSF" id="PIRSF000728">
    <property type="entry name" value="NAGK"/>
    <property type="match status" value="1"/>
</dbReference>
<dbReference type="SUPFAM" id="SSF53633">
    <property type="entry name" value="Carbamate kinase-like"/>
    <property type="match status" value="1"/>
</dbReference>
<name>LYSZ_METS5</name>
<sequence length="262" mass="27819">MIVVKIGGRVVKNALQNVIESVLRYPGKLILVHGGGDIVSEYTKRMGMEPTFVTSPEGIRSRYTSKEELDIYVMTMGLINKNIVTQLISKGKTAIGITGVDGGSVIGTRKKRIMILDERGKKRIIDGGYTGKIVSVNSQLISSLTSLVDVIVISPIALDTEESTPLNVDGDQMAFNVARAVKAEALLLLSDVDGVLLNNAVVKKLSKEEAKELATKIGPGMNRKVLMAAESVESGVSKVIIGSGLVPDAINSALAGRGTEIS</sequence>
<comment type="function">
    <text evidence="1">Involved in both the arginine and lysine biosynthetic pathways. Phosphorylates the LysW-bound precursors glutamate (for arginine biosynthesis), respectively alpha-aminoadipate (for lysine biosynthesis).</text>
</comment>
<comment type="catalytic activity">
    <reaction evidence="1">
        <text>[amino-group carrier protein]-C-terminal-N-(1,4-dicarboxybutan-1-yl)-L-glutamine + ATP = [amino-group carrier protein]-C-terminal-N-(1-carboxy-5-phosphooxy-5-oxopentan-1-yl)-L-glutamine + ADP</text>
        <dbReference type="Rhea" id="RHEA:41944"/>
        <dbReference type="Rhea" id="RHEA-COMP:9694"/>
        <dbReference type="Rhea" id="RHEA-COMP:9712"/>
        <dbReference type="ChEBI" id="CHEBI:30616"/>
        <dbReference type="ChEBI" id="CHEBI:78499"/>
        <dbReference type="ChEBI" id="CHEBI:78503"/>
        <dbReference type="ChEBI" id="CHEBI:456216"/>
        <dbReference type="EC" id="2.7.2.17"/>
    </reaction>
</comment>
<comment type="catalytic activity">
    <reaction evidence="1">
        <text>[amino-group carrier protein]-C-terminal-gamma-(L-glutamyl)-L-glutamate + ATP = [amino-group carrier protein]-C-terminal-gamma-(5-phospho-L-glutamyl)-L-glutamate + ADP</text>
        <dbReference type="Rhea" id="RHEA:52632"/>
        <dbReference type="Rhea" id="RHEA-COMP:13311"/>
        <dbReference type="Rhea" id="RHEA-COMP:13313"/>
        <dbReference type="ChEBI" id="CHEBI:30616"/>
        <dbReference type="ChEBI" id="CHEBI:136714"/>
        <dbReference type="ChEBI" id="CHEBI:136717"/>
        <dbReference type="ChEBI" id="CHEBI:456216"/>
        <dbReference type="EC" id="2.7.2.19"/>
    </reaction>
</comment>
<comment type="pathway">
    <text evidence="1">Amino-acid biosynthesis; L-lysine biosynthesis via AAA pathway; L-lysine from L-alpha-aminoadipate (Thermus route): step 2/5.</text>
</comment>
<comment type="pathway">
    <text evidence="1">Amino-acid biosynthesis; L-arginine biosynthesis.</text>
</comment>
<comment type="subcellular location">
    <subcellularLocation>
        <location evidence="1">Cytoplasm</location>
    </subcellularLocation>
</comment>
<comment type="similarity">
    <text evidence="1">Belongs to the acetylglutamate kinase family. LysZ subfamily.</text>
</comment>
<feature type="chain" id="PRO_1000071218" description="[LysW]-aminoadipate/[LysW]-glutamate kinase">
    <location>
        <begin position="1"/>
        <end position="262"/>
    </location>
</feature>
<feature type="binding site" evidence="1">
    <location>
        <begin position="35"/>
        <end position="36"/>
    </location>
    <ligand>
        <name>substrate</name>
    </ligand>
</feature>
<feature type="binding site" evidence="1">
    <location>
        <position position="62"/>
    </location>
    <ligand>
        <name>substrate</name>
    </ligand>
</feature>
<feature type="binding site" evidence="1">
    <location>
        <position position="167"/>
    </location>
    <ligand>
        <name>substrate</name>
    </ligand>
</feature>
<feature type="site" description="Transition state stabilizer" evidence="1">
    <location>
        <position position="5"/>
    </location>
</feature>
<feature type="site" description="Transition state stabilizer" evidence="1">
    <location>
        <position position="224"/>
    </location>
</feature>